<comment type="function">
    <text evidence="4">Hydrolyzes a variety of proteins.</text>
</comment>
<comment type="catalytic activity">
    <reaction>
        <text>Broad specificity similar to that of pepsin A. Clots milk by cleavage of a single 104-Ser-Phe-|-Met-Ala-107 bond in kappa-chain of casein.</text>
        <dbReference type="EC" id="3.4.23.4"/>
    </reaction>
</comment>
<comment type="activity regulation">
    <text evidence="4">Inhibited by pepstatin.</text>
</comment>
<comment type="biophysicochemical properties">
    <phDependence>
        <text>Optimum pH is about 2.5.</text>
    </phDependence>
</comment>
<comment type="subunit">
    <text evidence="1">Monomer.</text>
</comment>
<comment type="developmental stage">
    <text>Expressed in adult, not neonate-specific as in other organisms.</text>
</comment>
<comment type="similarity">
    <text evidence="5">Belongs to the peptidase A1 family.</text>
</comment>
<proteinExistence type="evidence at protein level"/>
<protein>
    <recommendedName>
        <fullName>Chymosin</fullName>
        <ecNumber>3.4.23.4</ecNumber>
    </recommendedName>
    <alternativeName>
        <fullName>Preprorennin</fullName>
    </alternativeName>
</protein>
<accession>Q9N2D2</accession>
<reference key="1">
    <citation type="journal article" date="2000" name="J. Biochem.">
        <title>New World monkey pepsinogens A and C, and prochymosins. Purification, characterization of enzymatic properties, cDNA cloning, and molecular evolution.</title>
        <authorList>
            <person name="Kageyama T."/>
        </authorList>
    </citation>
    <scope>NUCLEOTIDE SEQUENCE [MRNA]</scope>
    <scope>PROTEIN SEQUENCE OF 17-26</scope>
    <scope>FUNCTION</scope>
    <scope>ACTIVITY REGULATION</scope>
    <source>
        <tissue>Gastric mucosa</tissue>
    </source>
</reference>
<feature type="signal peptide" evidence="4">
    <location>
        <begin position="1"/>
        <end position="16"/>
    </location>
</feature>
<feature type="propeptide" id="PRO_0000025990" description="Activation peptide" evidence="1">
    <location>
        <begin position="17"/>
        <end position="58"/>
    </location>
</feature>
<feature type="chain" id="PRO_0000025991" description="Chymosin">
    <location>
        <begin position="59"/>
        <end position="381"/>
    </location>
</feature>
<feature type="domain" description="Peptidase A1" evidence="2">
    <location>
        <begin position="74"/>
        <end position="378"/>
    </location>
</feature>
<feature type="repeat" description="1">
    <location>
        <begin position="92"/>
        <end position="102"/>
    </location>
</feature>
<feature type="repeat" description="2">
    <location>
        <begin position="274"/>
        <end position="284"/>
    </location>
</feature>
<feature type="active site" evidence="3">
    <location>
        <position position="92"/>
    </location>
</feature>
<feature type="active site" evidence="3">
    <location>
        <position position="274"/>
    </location>
</feature>
<feature type="disulfide bond" evidence="1">
    <location>
        <begin position="105"/>
        <end position="110"/>
    </location>
</feature>
<feature type="disulfide bond" evidence="1">
    <location>
        <begin position="265"/>
        <end position="269"/>
    </location>
</feature>
<feature type="disulfide bond" evidence="1">
    <location>
        <begin position="308"/>
        <end position="341"/>
    </location>
</feature>
<evidence type="ECO:0000250" key="1"/>
<evidence type="ECO:0000255" key="2">
    <source>
        <dbReference type="PROSITE-ProRule" id="PRU01103"/>
    </source>
</evidence>
<evidence type="ECO:0000255" key="3">
    <source>
        <dbReference type="PROSITE-ProRule" id="PRU10094"/>
    </source>
</evidence>
<evidence type="ECO:0000269" key="4">
    <source>
    </source>
</evidence>
<evidence type="ECO:0000305" key="5"/>
<name>CHYM_CALJA</name>
<dbReference type="EC" id="3.4.23.4"/>
<dbReference type="EMBL" id="AB038386">
    <property type="protein sequence ID" value="BAA90873.1"/>
    <property type="molecule type" value="mRNA"/>
</dbReference>
<dbReference type="PIR" id="JC7247">
    <property type="entry name" value="JC7247"/>
</dbReference>
<dbReference type="SMR" id="Q9N2D2"/>
<dbReference type="STRING" id="9483.ENSCJAP00000006271"/>
<dbReference type="MEROPS" id="A01.006"/>
<dbReference type="GeneID" id="100411198"/>
<dbReference type="KEGG" id="cjc:100411198"/>
<dbReference type="eggNOG" id="KOG1339">
    <property type="taxonomic scope" value="Eukaryota"/>
</dbReference>
<dbReference type="HOGENOM" id="CLU_013253_3_0_1"/>
<dbReference type="InParanoid" id="Q9N2D2"/>
<dbReference type="OrthoDB" id="771136at2759"/>
<dbReference type="TreeFam" id="TF314990"/>
<dbReference type="Proteomes" id="UP000008225">
    <property type="component" value="Unplaced"/>
</dbReference>
<dbReference type="GO" id="GO:0004190">
    <property type="term" value="F:aspartic-type endopeptidase activity"/>
    <property type="evidence" value="ECO:0007669"/>
    <property type="project" value="UniProtKB-KW"/>
</dbReference>
<dbReference type="GO" id="GO:0007586">
    <property type="term" value="P:digestion"/>
    <property type="evidence" value="ECO:0007669"/>
    <property type="project" value="UniProtKB-KW"/>
</dbReference>
<dbReference type="GO" id="GO:0006508">
    <property type="term" value="P:proteolysis"/>
    <property type="evidence" value="ECO:0007669"/>
    <property type="project" value="UniProtKB-KW"/>
</dbReference>
<dbReference type="CDD" id="cd05478">
    <property type="entry name" value="pepsin_A"/>
    <property type="match status" value="1"/>
</dbReference>
<dbReference type="FunFam" id="2.40.70.10:FF:000006">
    <property type="entry name" value="Cathepsin E"/>
    <property type="match status" value="1"/>
</dbReference>
<dbReference type="FunFam" id="2.40.70.10:FF:000004">
    <property type="entry name" value="Pepsin A"/>
    <property type="match status" value="1"/>
</dbReference>
<dbReference type="Gene3D" id="6.10.140.60">
    <property type="match status" value="1"/>
</dbReference>
<dbReference type="Gene3D" id="2.40.70.10">
    <property type="entry name" value="Acid Proteases"/>
    <property type="match status" value="2"/>
</dbReference>
<dbReference type="InterPro" id="IPR001461">
    <property type="entry name" value="Aspartic_peptidase_A1"/>
</dbReference>
<dbReference type="InterPro" id="IPR001969">
    <property type="entry name" value="Aspartic_peptidase_AS"/>
</dbReference>
<dbReference type="InterPro" id="IPR012848">
    <property type="entry name" value="Aspartic_peptidase_N"/>
</dbReference>
<dbReference type="InterPro" id="IPR034162">
    <property type="entry name" value="Pepsin_A"/>
</dbReference>
<dbReference type="InterPro" id="IPR033121">
    <property type="entry name" value="PEPTIDASE_A1"/>
</dbReference>
<dbReference type="InterPro" id="IPR021109">
    <property type="entry name" value="Peptidase_aspartic_dom_sf"/>
</dbReference>
<dbReference type="PANTHER" id="PTHR47966">
    <property type="entry name" value="BETA-SITE APP-CLEAVING ENZYME, ISOFORM A-RELATED"/>
    <property type="match status" value="1"/>
</dbReference>
<dbReference type="PANTHER" id="PTHR47966:SF13">
    <property type="entry name" value="CHYMOSIN"/>
    <property type="match status" value="1"/>
</dbReference>
<dbReference type="Pfam" id="PF07966">
    <property type="entry name" value="A1_Propeptide"/>
    <property type="match status" value="1"/>
</dbReference>
<dbReference type="Pfam" id="PF00026">
    <property type="entry name" value="Asp"/>
    <property type="match status" value="1"/>
</dbReference>
<dbReference type="PRINTS" id="PR00792">
    <property type="entry name" value="PEPSIN"/>
</dbReference>
<dbReference type="SUPFAM" id="SSF50630">
    <property type="entry name" value="Acid proteases"/>
    <property type="match status" value="1"/>
</dbReference>
<dbReference type="PROSITE" id="PS00141">
    <property type="entry name" value="ASP_PROTEASE"/>
    <property type="match status" value="2"/>
</dbReference>
<dbReference type="PROSITE" id="PS51767">
    <property type="entry name" value="PEPTIDASE_A1"/>
    <property type="match status" value="1"/>
</dbReference>
<sequence length="381" mass="41896">MRGFVVLLAVFALSQASGIVRIPLHKGKSLRRALKERGLLEDFLKNHQHAVSRKHSNSREVASEFLTNYLDCQYFGKIYIGTPPQEFTVVFDTGSSDLWVPSVYCNSVACQNHHRFDPSKSSTFQNMDKSLSIQYGTGSMQGLLGYDTVTVSSIVDPHQTVGLSTQEPGDVFTYSEFDGILGLAYPSLASEYSVPVFDNMMDRHLVAQDLFSVYMSRNEQGSMLTLGAIDPSYYTGSLHWIPVTVQEYWQFTVDSVTVDGVVVACDGGCQAILDTGTSMLVGPGSDIFNIQQAIGATEGQYGEFDIDCGTLSSMPTVVFEINGKKYPLPPSAYTNQDQGFCTSGFQGDDSSQQWILGDVFIREYYSVFDRASNLVGLAKAI</sequence>
<organism>
    <name type="scientific">Callithrix jacchus</name>
    <name type="common">White-tufted-ear marmoset</name>
    <dbReference type="NCBI Taxonomy" id="9483"/>
    <lineage>
        <taxon>Eukaryota</taxon>
        <taxon>Metazoa</taxon>
        <taxon>Chordata</taxon>
        <taxon>Craniata</taxon>
        <taxon>Vertebrata</taxon>
        <taxon>Euteleostomi</taxon>
        <taxon>Mammalia</taxon>
        <taxon>Eutheria</taxon>
        <taxon>Euarchontoglires</taxon>
        <taxon>Primates</taxon>
        <taxon>Haplorrhini</taxon>
        <taxon>Platyrrhini</taxon>
        <taxon>Cebidae</taxon>
        <taxon>Callitrichinae</taxon>
        <taxon>Callithrix</taxon>
        <taxon>Callithrix</taxon>
    </lineage>
</organism>
<keyword id="KW-0064">Aspartyl protease</keyword>
<keyword id="KW-0222">Digestion</keyword>
<keyword id="KW-0903">Direct protein sequencing</keyword>
<keyword id="KW-1015">Disulfide bond</keyword>
<keyword id="KW-0378">Hydrolase</keyword>
<keyword id="KW-0645">Protease</keyword>
<keyword id="KW-1185">Reference proteome</keyword>
<keyword id="KW-0677">Repeat</keyword>
<keyword id="KW-0732">Signal</keyword>
<keyword id="KW-0865">Zymogen</keyword>
<gene>
    <name type="primary">CYM</name>
</gene>